<organism>
    <name type="scientific">Escherichia coli (strain K12 / MC4100 / BW2952)</name>
    <dbReference type="NCBI Taxonomy" id="595496"/>
    <lineage>
        <taxon>Bacteria</taxon>
        <taxon>Pseudomonadati</taxon>
        <taxon>Pseudomonadota</taxon>
        <taxon>Gammaproteobacteria</taxon>
        <taxon>Enterobacterales</taxon>
        <taxon>Enterobacteriaceae</taxon>
        <taxon>Escherichia</taxon>
    </lineage>
</organism>
<gene>
    <name evidence="1" type="primary">kbaZ</name>
    <name type="ordered locus">BWG_2838</name>
</gene>
<proteinExistence type="inferred from homology"/>
<name>KBAZ_ECOBW</name>
<protein>
    <recommendedName>
        <fullName evidence="1">D-tagatose-1,6-bisphosphate aldolase subunit KbaZ</fullName>
    </recommendedName>
</protein>
<evidence type="ECO:0000255" key="1">
    <source>
        <dbReference type="HAMAP-Rule" id="MF_01295"/>
    </source>
</evidence>
<dbReference type="EMBL" id="CP001396">
    <property type="protein sequence ID" value="ACR65611.1"/>
    <property type="molecule type" value="Genomic_DNA"/>
</dbReference>
<dbReference type="RefSeq" id="WP_000681920.1">
    <property type="nucleotide sequence ID" value="NC_012759.1"/>
</dbReference>
<dbReference type="SMR" id="C4ZR44"/>
<dbReference type="KEGG" id="ebw:BWG_2838"/>
<dbReference type="HOGENOM" id="CLU_053334_0_0_6"/>
<dbReference type="UniPathway" id="UPA00704">
    <property type="reaction ID" value="UER00716"/>
</dbReference>
<dbReference type="GO" id="GO:0005886">
    <property type="term" value="C:plasma membrane"/>
    <property type="evidence" value="ECO:0007669"/>
    <property type="project" value="TreeGrafter"/>
</dbReference>
<dbReference type="GO" id="GO:0005975">
    <property type="term" value="P:carbohydrate metabolic process"/>
    <property type="evidence" value="ECO:0007669"/>
    <property type="project" value="InterPro"/>
</dbReference>
<dbReference type="GO" id="GO:2001059">
    <property type="term" value="P:D-tagatose 6-phosphate catabolic process"/>
    <property type="evidence" value="ECO:0007669"/>
    <property type="project" value="UniProtKB-UniRule"/>
</dbReference>
<dbReference type="GO" id="GO:0009401">
    <property type="term" value="P:phosphoenolpyruvate-dependent sugar phosphotransferase system"/>
    <property type="evidence" value="ECO:0007669"/>
    <property type="project" value="TreeGrafter"/>
</dbReference>
<dbReference type="Gene3D" id="3.20.20.70">
    <property type="entry name" value="Aldolase class I"/>
    <property type="match status" value="1"/>
</dbReference>
<dbReference type="Gene3D" id="1.10.400.20">
    <property type="entry name" value="putative tagatose 6-phosphate kinase domain like"/>
    <property type="match status" value="1"/>
</dbReference>
<dbReference type="HAMAP" id="MF_01295">
    <property type="entry name" value="Tagatose_aldol_KbaZ"/>
    <property type="match status" value="1"/>
</dbReference>
<dbReference type="InterPro" id="IPR013785">
    <property type="entry name" value="Aldolase_TIM"/>
</dbReference>
<dbReference type="InterPro" id="IPR012062">
    <property type="entry name" value="GatZ/KbaZ-like"/>
</dbReference>
<dbReference type="InterPro" id="IPR050303">
    <property type="entry name" value="GatZ_KbaZ_carbometab"/>
</dbReference>
<dbReference type="InterPro" id="IPR023435">
    <property type="entry name" value="TagBP_ald_KbaZ"/>
</dbReference>
<dbReference type="NCBIfam" id="TIGR02810">
    <property type="entry name" value="agaZ_gatZ"/>
    <property type="match status" value="1"/>
</dbReference>
<dbReference type="NCBIfam" id="NF012002">
    <property type="entry name" value="PRK15458.1"/>
    <property type="match status" value="1"/>
</dbReference>
<dbReference type="PANTHER" id="PTHR32502:SF2">
    <property type="entry name" value="D-TAGATOSE-1,6-BISPHOSPHATE ALDOLASE SUBUNIT KBAZ"/>
    <property type="match status" value="1"/>
</dbReference>
<dbReference type="PANTHER" id="PTHR32502">
    <property type="entry name" value="N-ACETYLGALACTOSAMINE PERMEASE II COMPONENT-RELATED"/>
    <property type="match status" value="1"/>
</dbReference>
<dbReference type="Pfam" id="PF08013">
    <property type="entry name" value="GatZ_KbaZ-like"/>
    <property type="match status" value="1"/>
</dbReference>
<dbReference type="PIRSF" id="PIRSF009264">
    <property type="entry name" value="TagBP_ald_AgaZ"/>
    <property type="match status" value="1"/>
</dbReference>
<dbReference type="SUPFAM" id="SSF51569">
    <property type="entry name" value="Aldolase"/>
    <property type="match status" value="1"/>
</dbReference>
<reference key="1">
    <citation type="journal article" date="2009" name="J. Bacteriol.">
        <title>Genomic sequencing reveals regulatory mutations and recombinational events in the widely used MC4100 lineage of Escherichia coli K-12.</title>
        <authorList>
            <person name="Ferenci T."/>
            <person name="Zhou Z."/>
            <person name="Betteridge T."/>
            <person name="Ren Y."/>
            <person name="Liu Y."/>
            <person name="Feng L."/>
            <person name="Reeves P.R."/>
            <person name="Wang L."/>
        </authorList>
    </citation>
    <scope>NUCLEOTIDE SEQUENCE [LARGE SCALE GENOMIC DNA]</scope>
    <source>
        <strain>K12 / MC4100 / BW2952</strain>
    </source>
</reference>
<accession>C4ZR44</accession>
<sequence>MKHLTEMVRQHKAGKTNGIYAVCSAHPLVLEAAIRYASANQTPLLIEATSNQVDQFGGYTGMTPADFRGFVCQLADSLNFPQDALILGGDHLGPNRWQNLPAAQAMANADDLIKSYVAAGFKKIHLDCSMSCQDDPIPLTDDIVAERAARLAKVAEETCLEHFGEADLEYVIGTEVPVPGGAHETLSELAVTTPDAARATLEAHRHAFEKQGLNAIWPRIIALVVQPGVEFDHTNVIDYQPAKASALSQMVENYETLIFEAHSTDYQTPQSLRQLVIDHFAILKVGPALTFALREALFSLAAIEEELVPAKACSGLRQVLEDVMLDRPEYWQSHYHGDGNARRLARGYSYSDRVRYYWPDSQIDDAFAHLVRNLADSPIPLPLISQYLPLQYVKVRSGELQPTPRELIINHIQDILAQYHTACEGQ</sequence>
<feature type="chain" id="PRO_1000214221" description="D-tagatose-1,6-bisphosphate aldolase subunit KbaZ">
    <location>
        <begin position="1"/>
        <end position="426"/>
    </location>
</feature>
<comment type="function">
    <text evidence="1">Component of the tagatose-1,6-bisphosphate aldolase KbaYZ that is required for full activity and stability of the Y subunit. Could have a chaperone-like function for the proper and stable folding of KbaY. When expressed alone, KbaZ does not show any aldolase activity.</text>
</comment>
<comment type="pathway">
    <text evidence="1">Carbohydrate metabolism; D-tagatose 6-phosphate degradation; D-glyceraldehyde 3-phosphate and glycerone phosphate from D-tagatose 6-phosphate: step 2/2.</text>
</comment>
<comment type="subunit">
    <text evidence="1">Forms a complex with KbaY.</text>
</comment>
<comment type="similarity">
    <text evidence="1">Belongs to the GatZ/KbaZ family. KbaZ subfamily.</text>
</comment>